<proteinExistence type="inferred from homology"/>
<dbReference type="EMBL" id="BA000018">
    <property type="protein sequence ID" value="BAB42522.1"/>
    <property type="molecule type" value="Genomic_DNA"/>
</dbReference>
<dbReference type="PIR" id="E89920">
    <property type="entry name" value="E89920"/>
</dbReference>
<dbReference type="RefSeq" id="WP_000404645.1">
    <property type="nucleotide sequence ID" value="NC_002745.2"/>
</dbReference>
<dbReference type="SMR" id="Q99U59"/>
<dbReference type="EnsemblBacteria" id="BAB42522">
    <property type="protein sequence ID" value="BAB42522"/>
    <property type="gene ID" value="BAB42522"/>
</dbReference>
<dbReference type="KEGG" id="sau:SA1262"/>
<dbReference type="HOGENOM" id="CLU_733295_0_0_9"/>
<dbReference type="GO" id="GO:0016491">
    <property type="term" value="F:oxidoreductase activity"/>
    <property type="evidence" value="ECO:0007669"/>
    <property type="project" value="TreeGrafter"/>
</dbReference>
<dbReference type="Gene3D" id="1.25.10.10">
    <property type="entry name" value="Leucine-rich Repeat Variant"/>
    <property type="match status" value="1"/>
</dbReference>
<dbReference type="Gene3D" id="3.30.1370.70">
    <property type="entry name" value="Scaffold protein Nfu/NifU, N-terminal domain"/>
    <property type="match status" value="1"/>
</dbReference>
<dbReference type="InterPro" id="IPR011989">
    <property type="entry name" value="ARM-like"/>
</dbReference>
<dbReference type="InterPro" id="IPR016024">
    <property type="entry name" value="ARM-type_fold"/>
</dbReference>
<dbReference type="InterPro" id="IPR014824">
    <property type="entry name" value="Nfu/NifU_N"/>
</dbReference>
<dbReference type="InterPro" id="IPR036498">
    <property type="entry name" value="Nfu/NifU_N_sf"/>
</dbReference>
<dbReference type="InterPro" id="IPR004155">
    <property type="entry name" value="PBS_lyase_HEAT"/>
</dbReference>
<dbReference type="InterPro" id="IPR025989">
    <property type="entry name" value="Virulence_F_dom"/>
</dbReference>
<dbReference type="PANTHER" id="PTHR12697:SF37">
    <property type="entry name" value="CONSERVED VIRULENCE FACTOR C"/>
    <property type="match status" value="1"/>
</dbReference>
<dbReference type="PANTHER" id="PTHR12697">
    <property type="entry name" value="PBS LYASE HEAT-LIKE PROTEIN"/>
    <property type="match status" value="1"/>
</dbReference>
<dbReference type="Pfam" id="PF13646">
    <property type="entry name" value="HEAT_2"/>
    <property type="match status" value="1"/>
</dbReference>
<dbReference type="Pfam" id="PF08712">
    <property type="entry name" value="Nfu_N"/>
    <property type="match status" value="1"/>
</dbReference>
<dbReference type="Pfam" id="PF13769">
    <property type="entry name" value="Virulence_fact"/>
    <property type="match status" value="1"/>
</dbReference>
<dbReference type="SMART" id="SM00567">
    <property type="entry name" value="EZ_HEAT"/>
    <property type="match status" value="3"/>
</dbReference>
<dbReference type="SMART" id="SM00932">
    <property type="entry name" value="Nfu_N"/>
    <property type="match status" value="1"/>
</dbReference>
<dbReference type="SUPFAM" id="SSF48371">
    <property type="entry name" value="ARM repeat"/>
    <property type="match status" value="1"/>
</dbReference>
<dbReference type="SUPFAM" id="SSF110836">
    <property type="entry name" value="Hypothetical protein SAV1430"/>
    <property type="match status" value="1"/>
</dbReference>
<protein>
    <recommendedName>
        <fullName>Conserved virulence factor C</fullName>
    </recommendedName>
</protein>
<gene>
    <name type="primary">cvfC</name>
    <name type="ordered locus">SA1262</name>
</gene>
<sequence length="374" mass="42924">MEILRIEPTPSPNTMKVVLSYTREDKLSNTYKKVEETQPRFINQLLSIDGITSIFHVMNFLAVDKAPKADWEVILPDIKAAFSDANKVLESVNEPQIDNHFGEIKAELLTFKGIPYQIKLTSADQELREQLPQTYVDHMTQAQTAHDNIVFMRKWLDLGNRYGNIEEVMDGVLEEVLATYPESQLPVLVKHALEENHATNNYHFYRHVSLDEYHATDNWKTRLRMLNHFPKPTFEDIPLLDLALSDEKVPVRRQAIVLLGMIESKEILPYLYKGLRDKSPAVRRTAGDCISDLGYPEALPEMVLLLDDPQKIVRWRAAMFIFDEGNAEQLPALKAHINDNAFEVKLQIEMAISRIENGDEALGSVWKQMANRTI</sequence>
<reference key="1">
    <citation type="journal article" date="2001" name="Lancet">
        <title>Whole genome sequencing of meticillin-resistant Staphylococcus aureus.</title>
        <authorList>
            <person name="Kuroda M."/>
            <person name="Ohta T."/>
            <person name="Uchiyama I."/>
            <person name="Baba T."/>
            <person name="Yuzawa H."/>
            <person name="Kobayashi I."/>
            <person name="Cui L."/>
            <person name="Oguchi A."/>
            <person name="Aoki K."/>
            <person name="Nagai Y."/>
            <person name="Lian J.-Q."/>
            <person name="Ito T."/>
            <person name="Kanamori M."/>
            <person name="Matsumaru H."/>
            <person name="Maruyama A."/>
            <person name="Murakami H."/>
            <person name="Hosoyama A."/>
            <person name="Mizutani-Ui Y."/>
            <person name="Takahashi N.K."/>
            <person name="Sawano T."/>
            <person name="Inoue R."/>
            <person name="Kaito C."/>
            <person name="Sekimizu K."/>
            <person name="Hirakawa H."/>
            <person name="Kuhara S."/>
            <person name="Goto S."/>
            <person name="Yabuzaki J."/>
            <person name="Kanehisa M."/>
            <person name="Yamashita A."/>
            <person name="Oshima K."/>
            <person name="Furuya K."/>
            <person name="Yoshino C."/>
            <person name="Shiba T."/>
            <person name="Hattori M."/>
            <person name="Ogasawara N."/>
            <person name="Hayashi H."/>
            <person name="Hiramatsu K."/>
        </authorList>
    </citation>
    <scope>NUCLEOTIDE SEQUENCE [LARGE SCALE GENOMIC DNA]</scope>
    <source>
        <strain>N315</strain>
    </source>
</reference>
<evidence type="ECO:0000250" key="1"/>
<evidence type="ECO:0000305" key="2"/>
<feature type="chain" id="PRO_0000282308" description="Conserved virulence factor C">
    <location>
        <begin position="1"/>
        <end position="374"/>
    </location>
</feature>
<comment type="function">
    <text evidence="1">Required for hemolysin production.</text>
</comment>
<comment type="similarity">
    <text evidence="2">Belongs to the CvfC family.</text>
</comment>
<organism>
    <name type="scientific">Staphylococcus aureus (strain N315)</name>
    <dbReference type="NCBI Taxonomy" id="158879"/>
    <lineage>
        <taxon>Bacteria</taxon>
        <taxon>Bacillati</taxon>
        <taxon>Bacillota</taxon>
        <taxon>Bacilli</taxon>
        <taxon>Bacillales</taxon>
        <taxon>Staphylococcaceae</taxon>
        <taxon>Staphylococcus</taxon>
    </lineage>
</organism>
<keyword id="KW-0843">Virulence</keyword>
<accession>Q99U59</accession>
<name>CVFC_STAAN</name>